<name>CREN7_STAMF</name>
<reference key="1">
    <citation type="journal article" date="2009" name="BMC Genomics">
        <title>The complete genome sequence of Staphylothermus marinus reveals differences in sulfur metabolism among heterotrophic Crenarchaeota.</title>
        <authorList>
            <person name="Anderson I.J."/>
            <person name="Dharmarajan L."/>
            <person name="Rodriguez J."/>
            <person name="Hooper S."/>
            <person name="Porat I."/>
            <person name="Ulrich L.E."/>
            <person name="Elkins J.G."/>
            <person name="Mavromatis K."/>
            <person name="Sun H."/>
            <person name="Land M."/>
            <person name="Lapidus A."/>
            <person name="Lucas S."/>
            <person name="Barry K."/>
            <person name="Huber H."/>
            <person name="Zhulin I.B."/>
            <person name="Whitman W.B."/>
            <person name="Mukhopadhyay B."/>
            <person name="Woese C."/>
            <person name="Bristow J."/>
            <person name="Kyrpides N."/>
        </authorList>
    </citation>
    <scope>NUCLEOTIDE SEQUENCE [LARGE SCALE GENOMIC DNA]</scope>
    <source>
        <strain>ATCC 43588 / DSM 3639 / JCM 9404 / F1</strain>
    </source>
</reference>
<reference key="2">
    <citation type="journal article" date="2009" name="Stand. Genomic Sci.">
        <title>Complete genome sequence of Staphylothermus marinus Stetter and Fiala 1986 type strain F1.</title>
        <authorList>
            <person name="Anderson I.J."/>
            <person name="Sun H."/>
            <person name="Lapidus A."/>
            <person name="Copeland A."/>
            <person name="Glavina Del Rio T."/>
            <person name="Tice H."/>
            <person name="Dalin E."/>
            <person name="Lucas S."/>
            <person name="Barry K."/>
            <person name="Land M."/>
            <person name="Richardson P."/>
            <person name="Huber H."/>
            <person name="Kyrpides N.C."/>
        </authorList>
    </citation>
    <scope>NUCLEOTIDE SEQUENCE [LARGE SCALE GENOMIC DNA]</scope>
    <source>
        <strain>ATCC 43588 / DSM 3639 / JCM 9404 / F1</strain>
    </source>
</reference>
<gene>
    <name evidence="1" type="primary">creN7</name>
    <name type="ordered locus">Smar_0237</name>
</gene>
<evidence type="ECO:0000255" key="1">
    <source>
        <dbReference type="HAMAP-Rule" id="MF_01387"/>
    </source>
</evidence>
<comment type="function">
    <text evidence="1">A chromatin protein, binds double-stranded DNA without sequence specificity. Constrains negative DNA supercoils.</text>
</comment>
<comment type="subunit">
    <text evidence="1">Monomer.</text>
</comment>
<comment type="subcellular location">
    <subcellularLocation>
        <location evidence="1">Chromosome</location>
    </subcellularLocation>
    <subcellularLocation>
        <location evidence="1">Cytoplasm</location>
    </subcellularLocation>
</comment>
<comment type="PTM">
    <text evidence="1">Methylated at multiple sites, to varying extents.</text>
</comment>
<comment type="similarity">
    <text evidence="1">Belongs to the Cren7 family.</text>
</comment>
<keyword id="KW-0158">Chromosome</keyword>
<keyword id="KW-0963">Cytoplasm</keyword>
<keyword id="KW-0238">DNA-binding</keyword>
<keyword id="KW-0488">Methylation</keyword>
<keyword id="KW-1185">Reference proteome</keyword>
<feature type="chain" id="PRO_0000345175" description="Chromatin protein Cren7">
    <location>
        <begin position="1"/>
        <end position="62"/>
    </location>
</feature>
<protein>
    <recommendedName>
        <fullName evidence="1">Chromatin protein Cren7</fullName>
    </recommendedName>
</protein>
<proteinExistence type="inferred from homology"/>
<sequence length="62" mass="6836">MAACKDAVKVKTLSGKEVELVPKKVWQLSPKGRKGVKVGLFQDPETGKYFRAKVPDDYPICG</sequence>
<dbReference type="EMBL" id="CP000575">
    <property type="protein sequence ID" value="ABN69350.1"/>
    <property type="molecule type" value="Genomic_DNA"/>
</dbReference>
<dbReference type="RefSeq" id="WP_011838541.1">
    <property type="nucleotide sequence ID" value="NC_009033.1"/>
</dbReference>
<dbReference type="SMR" id="A3DL40"/>
<dbReference type="STRING" id="399550.Smar_0237"/>
<dbReference type="GeneID" id="4907802"/>
<dbReference type="KEGG" id="smr:Smar_0237"/>
<dbReference type="eggNOG" id="arCOG04114">
    <property type="taxonomic scope" value="Archaea"/>
</dbReference>
<dbReference type="HOGENOM" id="CLU_2911298_0_0_2"/>
<dbReference type="OrthoDB" id="38142at2157"/>
<dbReference type="Proteomes" id="UP000000254">
    <property type="component" value="Chromosome"/>
</dbReference>
<dbReference type="GO" id="GO:0005694">
    <property type="term" value="C:chromosome"/>
    <property type="evidence" value="ECO:0007669"/>
    <property type="project" value="UniProtKB-SubCell"/>
</dbReference>
<dbReference type="GO" id="GO:0005737">
    <property type="term" value="C:cytoplasm"/>
    <property type="evidence" value="ECO:0007669"/>
    <property type="project" value="UniProtKB-SubCell"/>
</dbReference>
<dbReference type="GO" id="GO:0003690">
    <property type="term" value="F:double-stranded DNA binding"/>
    <property type="evidence" value="ECO:0007669"/>
    <property type="project" value="UniProtKB-UniRule"/>
</dbReference>
<dbReference type="Gene3D" id="2.30.30.610">
    <property type="entry name" value="Chromatin protein Cren7"/>
    <property type="match status" value="1"/>
</dbReference>
<dbReference type="HAMAP" id="MF_01387">
    <property type="entry name" value="Chromatin_Cren7"/>
    <property type="match status" value="1"/>
</dbReference>
<dbReference type="InterPro" id="IPR038647">
    <property type="entry name" value="Cren7_sf"/>
</dbReference>
<dbReference type="InterPro" id="IPR020906">
    <property type="entry name" value="dsDNA-bd_Cren7"/>
</dbReference>
<dbReference type="Pfam" id="PF11520">
    <property type="entry name" value="Cren7"/>
    <property type="match status" value="1"/>
</dbReference>
<accession>A3DL40</accession>
<organism>
    <name type="scientific">Staphylothermus marinus (strain ATCC 43588 / DSM 3639 / JCM 9404 / F1)</name>
    <dbReference type="NCBI Taxonomy" id="399550"/>
    <lineage>
        <taxon>Archaea</taxon>
        <taxon>Thermoproteota</taxon>
        <taxon>Thermoprotei</taxon>
        <taxon>Desulfurococcales</taxon>
        <taxon>Desulfurococcaceae</taxon>
        <taxon>Staphylothermus</taxon>
    </lineage>
</organism>